<evidence type="ECO:0000255" key="1">
    <source>
        <dbReference type="HAMAP-Rule" id="MF_00436"/>
    </source>
</evidence>
<evidence type="ECO:0000255" key="2">
    <source>
        <dbReference type="PROSITE-ProRule" id="PRU01346"/>
    </source>
</evidence>
<dbReference type="EMBL" id="CP000352">
    <property type="protein sequence ID" value="ABF08980.1"/>
    <property type="molecule type" value="Genomic_DNA"/>
</dbReference>
<dbReference type="RefSeq" id="WP_011516814.1">
    <property type="nucleotide sequence ID" value="NC_007973.1"/>
</dbReference>
<dbReference type="SMR" id="Q1LLJ6"/>
<dbReference type="STRING" id="266264.Rmet_2101"/>
<dbReference type="KEGG" id="rme:Rmet_2101"/>
<dbReference type="eggNOG" id="COG1923">
    <property type="taxonomic scope" value="Bacteria"/>
</dbReference>
<dbReference type="HOGENOM" id="CLU_113688_2_2_4"/>
<dbReference type="Proteomes" id="UP000002429">
    <property type="component" value="Chromosome"/>
</dbReference>
<dbReference type="GO" id="GO:0005829">
    <property type="term" value="C:cytosol"/>
    <property type="evidence" value="ECO:0007669"/>
    <property type="project" value="TreeGrafter"/>
</dbReference>
<dbReference type="GO" id="GO:0003723">
    <property type="term" value="F:RNA binding"/>
    <property type="evidence" value="ECO:0007669"/>
    <property type="project" value="UniProtKB-UniRule"/>
</dbReference>
<dbReference type="GO" id="GO:0006355">
    <property type="term" value="P:regulation of DNA-templated transcription"/>
    <property type="evidence" value="ECO:0007669"/>
    <property type="project" value="InterPro"/>
</dbReference>
<dbReference type="GO" id="GO:0043487">
    <property type="term" value="P:regulation of RNA stability"/>
    <property type="evidence" value="ECO:0007669"/>
    <property type="project" value="TreeGrafter"/>
</dbReference>
<dbReference type="GO" id="GO:0045974">
    <property type="term" value="P:regulation of translation, ncRNA-mediated"/>
    <property type="evidence" value="ECO:0007669"/>
    <property type="project" value="TreeGrafter"/>
</dbReference>
<dbReference type="CDD" id="cd01716">
    <property type="entry name" value="Hfq"/>
    <property type="match status" value="1"/>
</dbReference>
<dbReference type="FunFam" id="2.30.30.100:FF:000001">
    <property type="entry name" value="RNA-binding protein Hfq"/>
    <property type="match status" value="1"/>
</dbReference>
<dbReference type="Gene3D" id="2.30.30.100">
    <property type="match status" value="1"/>
</dbReference>
<dbReference type="HAMAP" id="MF_00436">
    <property type="entry name" value="Hfq"/>
    <property type="match status" value="1"/>
</dbReference>
<dbReference type="InterPro" id="IPR005001">
    <property type="entry name" value="Hfq"/>
</dbReference>
<dbReference type="InterPro" id="IPR010920">
    <property type="entry name" value="LSM_dom_sf"/>
</dbReference>
<dbReference type="InterPro" id="IPR047575">
    <property type="entry name" value="Sm"/>
</dbReference>
<dbReference type="NCBIfam" id="TIGR02383">
    <property type="entry name" value="Hfq"/>
    <property type="match status" value="1"/>
</dbReference>
<dbReference type="NCBIfam" id="NF001602">
    <property type="entry name" value="PRK00395.1"/>
    <property type="match status" value="1"/>
</dbReference>
<dbReference type="PANTHER" id="PTHR34772">
    <property type="entry name" value="RNA-BINDING PROTEIN HFQ"/>
    <property type="match status" value="1"/>
</dbReference>
<dbReference type="PANTHER" id="PTHR34772:SF1">
    <property type="entry name" value="RNA-BINDING PROTEIN HFQ"/>
    <property type="match status" value="1"/>
</dbReference>
<dbReference type="Pfam" id="PF17209">
    <property type="entry name" value="Hfq"/>
    <property type="match status" value="1"/>
</dbReference>
<dbReference type="SUPFAM" id="SSF50182">
    <property type="entry name" value="Sm-like ribonucleoproteins"/>
    <property type="match status" value="1"/>
</dbReference>
<dbReference type="PROSITE" id="PS52002">
    <property type="entry name" value="SM"/>
    <property type="match status" value="1"/>
</dbReference>
<reference key="1">
    <citation type="journal article" date="2010" name="PLoS ONE">
        <title>The complete genome sequence of Cupriavidus metallidurans strain CH34, a master survivalist in harsh and anthropogenic environments.</title>
        <authorList>
            <person name="Janssen P.J."/>
            <person name="Van Houdt R."/>
            <person name="Moors H."/>
            <person name="Monsieurs P."/>
            <person name="Morin N."/>
            <person name="Michaux A."/>
            <person name="Benotmane M.A."/>
            <person name="Leys N."/>
            <person name="Vallaeys T."/>
            <person name="Lapidus A."/>
            <person name="Monchy S."/>
            <person name="Medigue C."/>
            <person name="Taghavi S."/>
            <person name="McCorkle S."/>
            <person name="Dunn J."/>
            <person name="van der Lelie D."/>
            <person name="Mergeay M."/>
        </authorList>
    </citation>
    <scope>NUCLEOTIDE SEQUENCE [LARGE SCALE GENOMIC DNA]</scope>
    <source>
        <strain>ATCC 43123 / DSM 2839 / NBRC 102507 / CH34</strain>
    </source>
</reference>
<gene>
    <name evidence="1" type="primary">hfq</name>
    <name type="ordered locus">Rmet_2101</name>
</gene>
<name>HFQ_CUPMC</name>
<sequence>MSNKGQLLQDPFLNALRKEHVPVSIYLVNGIKLQGNIESFDQYVVLLRNTVTQMVYKHAISTVVPARAVNFRVDDSSES</sequence>
<proteinExistence type="inferred from homology"/>
<organism>
    <name type="scientific">Cupriavidus metallidurans (strain ATCC 43123 / DSM 2839 / NBRC 102507 / CH34)</name>
    <name type="common">Ralstonia metallidurans</name>
    <dbReference type="NCBI Taxonomy" id="266264"/>
    <lineage>
        <taxon>Bacteria</taxon>
        <taxon>Pseudomonadati</taxon>
        <taxon>Pseudomonadota</taxon>
        <taxon>Betaproteobacteria</taxon>
        <taxon>Burkholderiales</taxon>
        <taxon>Burkholderiaceae</taxon>
        <taxon>Cupriavidus</taxon>
    </lineage>
</organism>
<protein>
    <recommendedName>
        <fullName evidence="1">RNA-binding protein Hfq</fullName>
    </recommendedName>
</protein>
<comment type="function">
    <text evidence="1">RNA chaperone that binds small regulatory RNA (sRNAs) and mRNAs to facilitate mRNA translational regulation in response to envelope stress, environmental stress and changes in metabolite concentrations. Also binds with high specificity to tRNAs.</text>
</comment>
<comment type="subunit">
    <text evidence="1">Homohexamer.</text>
</comment>
<comment type="similarity">
    <text evidence="1">Belongs to the Hfq family.</text>
</comment>
<accession>Q1LLJ6</accession>
<feature type="chain" id="PRO_0000265178" description="RNA-binding protein Hfq">
    <location>
        <begin position="1"/>
        <end position="79"/>
    </location>
</feature>
<feature type="domain" description="Sm" evidence="2">
    <location>
        <begin position="10"/>
        <end position="69"/>
    </location>
</feature>
<keyword id="KW-1185">Reference proteome</keyword>
<keyword id="KW-0694">RNA-binding</keyword>
<keyword id="KW-0346">Stress response</keyword>